<keyword id="KW-0020">Allergen</keyword>
<keyword id="KW-0903">Direct protein sequencing</keyword>
<keyword id="KW-0325">Glycoprotein</keyword>
<keyword id="KW-0378">Hydrolase</keyword>
<keyword id="KW-0645">Protease</keyword>
<keyword id="KW-1185">Reference proteome</keyword>
<keyword id="KW-0964">Secreted</keyword>
<keyword id="KW-0720">Serine protease</keyword>
<keyword id="KW-0732">Signal</keyword>
<keyword id="KW-0843">Virulence</keyword>
<keyword id="KW-0865">Zymogen</keyword>
<gene>
    <name type="primary">alp1</name>
    <name type="synonym">alk1</name>
    <name type="synonym">alp</name>
    <name type="ORF">AFUA_4G11800</name>
</gene>
<sequence length="403" mass="42190">MLSIKRTLLLLGAVLPAVFGAPVQETRRAAQKIPGKYIVTFKPGTDTATIESHTLWATDLHKRNLERRDTTSGEPPVGIEKSYKIKDFAAYAGSFDDATIEEIRKSADVAHVEEDQIWYLDALTTQKGAPWGLGSISHKGQASTDYIYDTSAGAGTYAYVVDSGINVNHVEFESRASLAYNAAGGSHVDSIGHGTHVAGTIGGKTYGVAKKTNLLSVKVFQGESSSTSIILDGFNWAVNDIVSKGRTKKAAINMSLGGGYSYAFNNAVENAFDEGVLSVVAAGNENSDASNTSPASAPNALTVAAINKSNARASFSNYGSVVDIFAPGQDILSAWIGSTTATNTISGTSMATPHIVGLSVYLMGLENLSGPAAVTARIKELATNGVVTNVKGSPNKLAYNGNA</sequence>
<name>ORYZ_ASPFU</name>
<proteinExistence type="evidence at protein level"/>
<evidence type="ECO:0000250" key="1"/>
<evidence type="ECO:0000255" key="2"/>
<evidence type="ECO:0000255" key="3">
    <source>
        <dbReference type="PROSITE-ProRule" id="PRU01240"/>
    </source>
</evidence>
<evidence type="ECO:0000269" key="4">
    <source>
    </source>
</evidence>
<evidence type="ECO:0000269" key="5">
    <source>
    </source>
</evidence>
<evidence type="ECO:0000269" key="6">
    <source>
    </source>
</evidence>
<evidence type="ECO:0000269" key="7">
    <source>
    </source>
</evidence>
<evidence type="ECO:0000269" key="8">
    <source>
    </source>
</evidence>
<evidence type="ECO:0000269" key="9">
    <source>
    </source>
</evidence>
<evidence type="ECO:0000305" key="10"/>
<organism>
    <name type="scientific">Aspergillus fumigatus (strain ATCC MYA-4609 / CBS 101355 / FGSC A1100 / Af293)</name>
    <name type="common">Neosartorya fumigata</name>
    <dbReference type="NCBI Taxonomy" id="330879"/>
    <lineage>
        <taxon>Eukaryota</taxon>
        <taxon>Fungi</taxon>
        <taxon>Dikarya</taxon>
        <taxon>Ascomycota</taxon>
        <taxon>Pezizomycotina</taxon>
        <taxon>Eurotiomycetes</taxon>
        <taxon>Eurotiomycetidae</taxon>
        <taxon>Eurotiales</taxon>
        <taxon>Aspergillaceae</taxon>
        <taxon>Aspergillus</taxon>
        <taxon>Aspergillus subgen. Fumigati</taxon>
    </lineage>
</organism>
<dbReference type="EC" id="3.4.21.63"/>
<dbReference type="EMBL" id="Z11580">
    <property type="protein sequence ID" value="CAA77666.1"/>
    <property type="molecule type" value="Genomic_DNA"/>
</dbReference>
<dbReference type="EMBL" id="M99420">
    <property type="protein sequence ID" value="AAB07672.1"/>
    <property type="molecule type" value="Genomic_DNA"/>
</dbReference>
<dbReference type="EMBL" id="AAHF01000005">
    <property type="protein sequence ID" value="EAL89613.1"/>
    <property type="molecule type" value="Genomic_DNA"/>
</dbReference>
<dbReference type="PIR" id="S22184">
    <property type="entry name" value="S22184"/>
</dbReference>
<dbReference type="RefSeq" id="XP_751651.1">
    <property type="nucleotide sequence ID" value="XM_746558.1"/>
</dbReference>
<dbReference type="SMR" id="P28296"/>
<dbReference type="STRING" id="330879.P28296"/>
<dbReference type="Allergome" id="3111">
    <property type="allergen name" value="Asp f 13.0101"/>
</dbReference>
<dbReference type="Allergome" id="66">
    <property type="allergen name" value="Asp f 13"/>
</dbReference>
<dbReference type="MEROPS" id="S08.053"/>
<dbReference type="GlyCosmos" id="P28296">
    <property type="glycosylation" value="3 sites, No reported glycans"/>
</dbReference>
<dbReference type="EnsemblFungi" id="EAL89613">
    <property type="protein sequence ID" value="EAL89613"/>
    <property type="gene ID" value="AFUA_4G11800"/>
</dbReference>
<dbReference type="GeneID" id="3509271"/>
<dbReference type="KEGG" id="afm:AFUA_4G11800"/>
<dbReference type="VEuPathDB" id="FungiDB:Afu4g11800"/>
<dbReference type="eggNOG" id="KOG1153">
    <property type="taxonomic scope" value="Eukaryota"/>
</dbReference>
<dbReference type="HOGENOM" id="CLU_011263_1_4_1"/>
<dbReference type="InParanoid" id="P28296"/>
<dbReference type="OMA" id="KYGFHGY"/>
<dbReference type="OrthoDB" id="206201at2759"/>
<dbReference type="Proteomes" id="UP000002530">
    <property type="component" value="Chromosome 4"/>
</dbReference>
<dbReference type="GO" id="GO:0005576">
    <property type="term" value="C:extracellular region"/>
    <property type="evidence" value="ECO:0000314"/>
    <property type="project" value="UniProtKB"/>
</dbReference>
<dbReference type="GO" id="GO:0005615">
    <property type="term" value="C:extracellular space"/>
    <property type="evidence" value="ECO:0000318"/>
    <property type="project" value="GO_Central"/>
</dbReference>
<dbReference type="GO" id="GO:0070051">
    <property type="term" value="F:fibrinogen binding"/>
    <property type="evidence" value="ECO:0000314"/>
    <property type="project" value="AspGD"/>
</dbReference>
<dbReference type="GO" id="GO:0019863">
    <property type="term" value="F:IgE binding"/>
    <property type="evidence" value="ECO:0000314"/>
    <property type="project" value="UniProtKB"/>
</dbReference>
<dbReference type="GO" id="GO:0008233">
    <property type="term" value="F:peptidase activity"/>
    <property type="evidence" value="ECO:0000314"/>
    <property type="project" value="UniProtKB"/>
</dbReference>
<dbReference type="GO" id="GO:0004252">
    <property type="term" value="F:serine-type endopeptidase activity"/>
    <property type="evidence" value="ECO:0000318"/>
    <property type="project" value="GO_Central"/>
</dbReference>
<dbReference type="GO" id="GO:0008236">
    <property type="term" value="F:serine-type peptidase activity"/>
    <property type="evidence" value="ECO:0000314"/>
    <property type="project" value="UniProtKB"/>
</dbReference>
<dbReference type="GO" id="GO:0060309">
    <property type="term" value="P:elastin catabolic process"/>
    <property type="evidence" value="ECO:0000314"/>
    <property type="project" value="AspGD"/>
</dbReference>
<dbReference type="GO" id="GO:0006508">
    <property type="term" value="P:proteolysis"/>
    <property type="evidence" value="ECO:0007669"/>
    <property type="project" value="UniProtKB-KW"/>
</dbReference>
<dbReference type="GO" id="GO:0042784">
    <property type="term" value="P:symbiont-mediated suppression of host complement activation"/>
    <property type="evidence" value="ECO:0000314"/>
    <property type="project" value="UniProtKB"/>
</dbReference>
<dbReference type="GO" id="GO:0141140">
    <property type="term" value="P:symbiont-mediated suppression of host immunoglobulin-mediated immune response"/>
    <property type="evidence" value="ECO:0000269"/>
    <property type="project" value="SigSci"/>
</dbReference>
<dbReference type="CDD" id="cd04077">
    <property type="entry name" value="Peptidases_S8_PCSK9_ProteinaseK_like"/>
    <property type="match status" value="1"/>
</dbReference>
<dbReference type="FunFam" id="3.30.70.80:FF:000008">
    <property type="entry name" value="Alkaline protease 1"/>
    <property type="match status" value="1"/>
</dbReference>
<dbReference type="FunFam" id="3.40.50.200:FF:000014">
    <property type="entry name" value="Proteinase K"/>
    <property type="match status" value="1"/>
</dbReference>
<dbReference type="Gene3D" id="3.30.70.80">
    <property type="entry name" value="Peptidase S8 propeptide/proteinase inhibitor I9"/>
    <property type="match status" value="1"/>
</dbReference>
<dbReference type="Gene3D" id="3.40.50.200">
    <property type="entry name" value="Peptidase S8/S53 domain"/>
    <property type="match status" value="1"/>
</dbReference>
<dbReference type="InterPro" id="IPR034193">
    <property type="entry name" value="PCSK9_ProteinaseK-like"/>
</dbReference>
<dbReference type="InterPro" id="IPR000209">
    <property type="entry name" value="Peptidase_S8/S53_dom"/>
</dbReference>
<dbReference type="InterPro" id="IPR036852">
    <property type="entry name" value="Peptidase_S8/S53_dom_sf"/>
</dbReference>
<dbReference type="InterPro" id="IPR023827">
    <property type="entry name" value="Peptidase_S8_Asp-AS"/>
</dbReference>
<dbReference type="InterPro" id="IPR022398">
    <property type="entry name" value="Peptidase_S8_His-AS"/>
</dbReference>
<dbReference type="InterPro" id="IPR023828">
    <property type="entry name" value="Peptidase_S8_Ser-AS"/>
</dbReference>
<dbReference type="InterPro" id="IPR050131">
    <property type="entry name" value="Peptidase_S8_subtilisin-like"/>
</dbReference>
<dbReference type="InterPro" id="IPR015500">
    <property type="entry name" value="Peptidase_S8_subtilisin-rel"/>
</dbReference>
<dbReference type="InterPro" id="IPR010259">
    <property type="entry name" value="S8pro/Inhibitor_I9"/>
</dbReference>
<dbReference type="InterPro" id="IPR037045">
    <property type="entry name" value="S8pro/Inhibitor_I9_sf"/>
</dbReference>
<dbReference type="PANTHER" id="PTHR43806:SF58">
    <property type="entry name" value="ALKALINE PROTEASE 1-RELATED"/>
    <property type="match status" value="1"/>
</dbReference>
<dbReference type="PANTHER" id="PTHR43806">
    <property type="entry name" value="PEPTIDASE S8"/>
    <property type="match status" value="1"/>
</dbReference>
<dbReference type="Pfam" id="PF05922">
    <property type="entry name" value="Inhibitor_I9"/>
    <property type="match status" value="1"/>
</dbReference>
<dbReference type="Pfam" id="PF00082">
    <property type="entry name" value="Peptidase_S8"/>
    <property type="match status" value="1"/>
</dbReference>
<dbReference type="PRINTS" id="PR00723">
    <property type="entry name" value="SUBTILISIN"/>
</dbReference>
<dbReference type="SUPFAM" id="SSF54897">
    <property type="entry name" value="Protease propeptides/inhibitors"/>
    <property type="match status" value="1"/>
</dbReference>
<dbReference type="SUPFAM" id="SSF52743">
    <property type="entry name" value="Subtilisin-like"/>
    <property type="match status" value="1"/>
</dbReference>
<dbReference type="PROSITE" id="PS51892">
    <property type="entry name" value="SUBTILASE"/>
    <property type="match status" value="1"/>
</dbReference>
<dbReference type="PROSITE" id="PS00136">
    <property type="entry name" value="SUBTILASE_ASP"/>
    <property type="match status" value="1"/>
</dbReference>
<dbReference type="PROSITE" id="PS00137">
    <property type="entry name" value="SUBTILASE_HIS"/>
    <property type="match status" value="1"/>
</dbReference>
<dbReference type="PROSITE" id="PS00138">
    <property type="entry name" value="SUBTILASE_SER"/>
    <property type="match status" value="1"/>
</dbReference>
<reference key="1">
    <citation type="journal article" date="1992" name="FEMS Microbiol. Lett.">
        <title>Nucleotide sequence of a genomic and a cDNA clone encoding an extracellular alkaline protease of Aspergillus fumigatus.</title>
        <authorList>
            <person name="Jaton-Ogay K."/>
            <person name="Suter M."/>
            <person name="Crameri R."/>
            <person name="Falchetto R."/>
            <person name="Fatih A."/>
            <person name="Monod M."/>
        </authorList>
    </citation>
    <scope>NUCLEOTIDE SEQUENCE [GENOMIC DNA]</scope>
</reference>
<reference key="2">
    <citation type="journal article" date="1993" name="Infect. Immun.">
        <title>Evidence for possible involvement of an elastolytic serine protease in aspergillosis.</title>
        <authorList>
            <person name="Kolattukudy P.E."/>
            <person name="Lee J.D."/>
            <person name="Rogers L.M."/>
            <person name="Zimmerman P."/>
            <person name="Ceselski S."/>
            <person name="Fox B."/>
            <person name="Stein B."/>
            <person name="Copelan E.A."/>
        </authorList>
    </citation>
    <scope>NUCLEOTIDE SEQUENCE [GENOMIC DNA]</scope>
    <scope>PROTEIN SEQUENCE OF 126-158</scope>
    <scope>FUNCTION</scope>
    <scope>BIOPHYSICOCHEMICAL PROPERTIES</scope>
    <scope>SUBCELLULAR LOCATION</scope>
</reference>
<reference key="3">
    <citation type="journal article" date="2005" name="Nature">
        <title>Genomic sequence of the pathogenic and allergenic filamentous fungus Aspergillus fumigatus.</title>
        <authorList>
            <person name="Nierman W.C."/>
            <person name="Pain A."/>
            <person name="Anderson M.J."/>
            <person name="Wortman J.R."/>
            <person name="Kim H.S."/>
            <person name="Arroyo J."/>
            <person name="Berriman M."/>
            <person name="Abe K."/>
            <person name="Archer D.B."/>
            <person name="Bermejo C."/>
            <person name="Bennett J.W."/>
            <person name="Bowyer P."/>
            <person name="Chen D."/>
            <person name="Collins M."/>
            <person name="Coulsen R."/>
            <person name="Davies R."/>
            <person name="Dyer P.S."/>
            <person name="Farman M.L."/>
            <person name="Fedorova N."/>
            <person name="Fedorova N.D."/>
            <person name="Feldblyum T.V."/>
            <person name="Fischer R."/>
            <person name="Fosker N."/>
            <person name="Fraser A."/>
            <person name="Garcia J.L."/>
            <person name="Garcia M.J."/>
            <person name="Goble A."/>
            <person name="Goldman G.H."/>
            <person name="Gomi K."/>
            <person name="Griffith-Jones S."/>
            <person name="Gwilliam R."/>
            <person name="Haas B.J."/>
            <person name="Haas H."/>
            <person name="Harris D.E."/>
            <person name="Horiuchi H."/>
            <person name="Huang J."/>
            <person name="Humphray S."/>
            <person name="Jimenez J."/>
            <person name="Keller N."/>
            <person name="Khouri H."/>
            <person name="Kitamoto K."/>
            <person name="Kobayashi T."/>
            <person name="Konzack S."/>
            <person name="Kulkarni R."/>
            <person name="Kumagai T."/>
            <person name="Lafton A."/>
            <person name="Latge J.-P."/>
            <person name="Li W."/>
            <person name="Lord A."/>
            <person name="Lu C."/>
            <person name="Majoros W.H."/>
            <person name="May G.S."/>
            <person name="Miller B.L."/>
            <person name="Mohamoud Y."/>
            <person name="Molina M."/>
            <person name="Monod M."/>
            <person name="Mouyna I."/>
            <person name="Mulligan S."/>
            <person name="Murphy L.D."/>
            <person name="O'Neil S."/>
            <person name="Paulsen I."/>
            <person name="Penalva M.A."/>
            <person name="Pertea M."/>
            <person name="Price C."/>
            <person name="Pritchard B.L."/>
            <person name="Quail M.A."/>
            <person name="Rabbinowitsch E."/>
            <person name="Rawlins N."/>
            <person name="Rajandream M.A."/>
            <person name="Reichard U."/>
            <person name="Renauld H."/>
            <person name="Robson G.D."/>
            <person name="Rodriguez de Cordoba S."/>
            <person name="Rodriguez-Pena J.M."/>
            <person name="Ronning C.M."/>
            <person name="Rutter S."/>
            <person name="Salzberg S.L."/>
            <person name="Sanchez M."/>
            <person name="Sanchez-Ferrero J.C."/>
            <person name="Saunders D."/>
            <person name="Seeger K."/>
            <person name="Squares R."/>
            <person name="Squares S."/>
            <person name="Takeuchi M."/>
            <person name="Tekaia F."/>
            <person name="Turner G."/>
            <person name="Vazquez de Aldana C.R."/>
            <person name="Weidman J."/>
            <person name="White O."/>
            <person name="Woodward J.R."/>
            <person name="Yu J.-H."/>
            <person name="Fraser C.M."/>
            <person name="Galagan J.E."/>
            <person name="Asai K."/>
            <person name="Machida M."/>
            <person name="Hall N."/>
            <person name="Barrell B.G."/>
            <person name="Denning D.W."/>
        </authorList>
    </citation>
    <scope>NUCLEOTIDE SEQUENCE [LARGE SCALE GENOMIC DNA]</scope>
    <source>
        <strain>ATCC MYA-4609 / CBS 101355 / FGSC A1100 / Af293</strain>
    </source>
</reference>
<reference key="4">
    <citation type="journal article" date="2000" name="Biochem. J.">
        <title>Identification and expression of an allergen Asp f 13 from Aspergillus fumigatus and epitope mapping using human IgE antibodies and rabbit polyclonal antibodies.</title>
        <authorList>
            <person name="Chow L.P."/>
            <person name="Liu S.L."/>
            <person name="Yu C.J."/>
            <person name="Liao H.K."/>
            <person name="Tsai J.J."/>
            <person name="Tang T.K."/>
        </authorList>
    </citation>
    <scope>PROTEIN SEQUENCE OF 102-112</scope>
    <scope>IDENTIFICATION BY MASS SPECTROMETRY</scope>
    <scope>SUBCELLULAR LOCATION</scope>
    <scope>IGE-BINDING</scope>
</reference>
<reference key="5">
    <citation type="journal article" date="2009" name="Infect. Immun.">
        <title>A regulator of Aspergillus fumigatus extracellular proteolytic activity is dispensable for virulence.</title>
        <authorList>
            <person name="Bergmann A."/>
            <person name="Hartmann T."/>
            <person name="Cairns T."/>
            <person name="Bignell E.M."/>
            <person name="Krappmann S."/>
        </authorList>
    </citation>
    <scope>INDUCTION</scope>
</reference>
<reference key="6">
    <citation type="journal article" date="2009" name="Infect. Immun.">
        <title>Transcription factor PrtT controls expression of multiple secreted proteases in the human pathogenic mold Aspergillus fumigatus.</title>
        <authorList>
            <person name="Sharon H."/>
            <person name="Hagag S."/>
            <person name="Osherov N."/>
        </authorList>
    </citation>
    <scope>INDUCTION</scope>
</reference>
<reference key="7">
    <citation type="journal article" date="2010" name="Infect. Immun.">
        <title>Secreted Aspergillus fumigatus protease Alp1 degrades human complement proteins C3, C4, and C5.</title>
        <authorList>
            <person name="Behnsen J."/>
            <person name="Lessing F."/>
            <person name="Schindler S."/>
            <person name="Wartenberg D."/>
            <person name="Jacobsen I.D."/>
            <person name="Thoen M."/>
            <person name="Zipfel P.F."/>
            <person name="Brakhage A.A."/>
        </authorList>
    </citation>
    <scope>SUBCELLULAR LOCATION</scope>
    <scope>IDENTIFICATION BY MASS SPECTROMETRY</scope>
    <scope>FUNCTION</scope>
</reference>
<reference key="8">
    <citation type="journal article" date="2010" name="Mol. Immunol.">
        <title>Secretion of a fungal protease represents a complement evasion mechanism in cerebral aspergillosis.</title>
        <authorList>
            <person name="Rambach G."/>
            <person name="Dum D."/>
            <person name="Mohsenipour I."/>
            <person name="Hagleitner M."/>
            <person name="Wurzner R."/>
            <person name="Lass-Florl C."/>
            <person name="Speth C."/>
        </authorList>
    </citation>
    <scope>SUBCELLULAR LOCATION</scope>
    <scope>FUNCTION</scope>
</reference>
<feature type="signal peptide" evidence="1">
    <location>
        <begin position="1"/>
        <end position="21"/>
    </location>
</feature>
<feature type="propeptide" id="PRO_0000027082" evidence="4">
    <location>
        <begin position="22"/>
        <end position="101"/>
    </location>
</feature>
<feature type="chain" id="PRO_0000027083" description="Alkaline protease 1">
    <location>
        <begin position="102"/>
        <end position="403"/>
    </location>
</feature>
<feature type="domain" description="Inhibitor I9" evidence="2">
    <location>
        <begin position="36"/>
        <end position="120"/>
    </location>
</feature>
<feature type="domain" description="Peptidase S8" evidence="3">
    <location>
        <begin position="130"/>
        <end position="403"/>
    </location>
</feature>
<feature type="active site" description="Charge relay system" evidence="3">
    <location>
        <position position="162"/>
    </location>
</feature>
<feature type="active site" description="Charge relay system" evidence="3">
    <location>
        <position position="193"/>
    </location>
</feature>
<feature type="active site" description="Charge relay system" evidence="3">
    <location>
        <position position="349"/>
    </location>
</feature>
<feature type="glycosylation site" description="N-linked (GlcNAc...) asparagine" evidence="2">
    <location>
        <position position="253"/>
    </location>
</feature>
<feature type="glycosylation site" description="N-linked (GlcNAc...) asparagine" evidence="2">
    <location>
        <position position="307"/>
    </location>
</feature>
<feature type="glycosylation site" description="N-linked (GlcNAc...) asparagine" evidence="2">
    <location>
        <position position="367"/>
    </location>
</feature>
<feature type="sequence conflict" description="In Ref. 1; CAA77666." evidence="10" ref="1">
    <original>SA</original>
    <variation>RG</variation>
    <location>
        <begin position="106"/>
        <end position="107"/>
    </location>
</feature>
<feature type="sequence conflict" description="In Ref. 2; AAB07672." evidence="10" ref="2">
    <original>A</original>
    <variation>R</variation>
    <location>
        <position position="295"/>
    </location>
</feature>
<accession>P28296</accession>
<accession>Q4WQ71</accession>
<protein>
    <recommendedName>
        <fullName>Alkaline protease 1</fullName>
        <shortName>ALP</shortName>
        <ecNumber>3.4.21.63</ecNumber>
    </recommendedName>
    <alternativeName>
        <fullName>Aspergillopeptidase B</fullName>
    </alternativeName>
    <alternativeName>
        <fullName>Aspergillus proteinase B</fullName>
    </alternativeName>
    <alternativeName>
        <fullName>Elastase</fullName>
    </alternativeName>
    <alternativeName>
        <fullName>Elastinolytic serine proteinase</fullName>
    </alternativeName>
    <alternativeName>
        <fullName>Oryzin</fullName>
    </alternativeName>
    <allergenName>Asp f 13</allergenName>
</protein>
<comment type="function">
    <text evidence="7 8 9">Secreted alkaline protease that allows assimilation of proteinaceous substrates. Acts as a significant virulence factor in invasive aspergillosis. Involved in immune evasion from the human and mice complement systems during infection. Efficiently cleaves important components of the complement cascade such as such as C3, C4, C5, and C1q, as well as IgG, which leads to down-regulation of complement activation at the hyphal surface.</text>
</comment>
<comment type="catalytic activity">
    <reaction>
        <text>Hydrolysis of proteins with broad specificity, and of Bz-Arg-OEt &gt; Ac-Tyr-OEt. Does not hydrolyze peptide amides.</text>
        <dbReference type="EC" id="3.4.21.63"/>
    </reaction>
</comment>
<comment type="biophysicochemical properties">
    <phDependence>
        <text evidence="9">Optimum pH is 7-8.</text>
    </phDependence>
</comment>
<comment type="subcellular location">
    <subcellularLocation>
        <location evidence="4 7 8 9">Secreted</location>
    </subcellularLocation>
</comment>
<comment type="induction">
    <text evidence="5 6">Expression is controlled by the prtT transcription factor.</text>
</comment>
<comment type="allergen">
    <text>Causes an allergic reaction in human. Binds to IgE via three immunodominant epitopes localized at the C-terminal part.</text>
</comment>
<comment type="similarity">
    <text evidence="10">Belongs to the peptidase S8 family.</text>
</comment>